<accession>Q54WY8</accession>
<gene>
    <name type="primary">gacN</name>
    <name type="ORF">DDB_G0279315</name>
</gene>
<evidence type="ECO:0000250" key="1"/>
<evidence type="ECO:0000255" key="2"/>
<evidence type="ECO:0000255" key="3">
    <source>
        <dbReference type="PROSITE-ProRule" id="PRU00172"/>
    </source>
</evidence>
<evidence type="ECO:0000256" key="4">
    <source>
        <dbReference type="SAM" id="MobiDB-lite"/>
    </source>
</evidence>
<dbReference type="EMBL" id="AAFI02000030">
    <property type="protein sequence ID" value="EAL67806.1"/>
    <property type="molecule type" value="Genomic_DNA"/>
</dbReference>
<dbReference type="RefSeq" id="XP_641789.1">
    <property type="nucleotide sequence ID" value="XM_636697.1"/>
</dbReference>
<dbReference type="SMR" id="Q54WY8"/>
<dbReference type="PaxDb" id="44689-DDB0233784"/>
<dbReference type="EnsemblProtists" id="EAL67806">
    <property type="protein sequence ID" value="EAL67806"/>
    <property type="gene ID" value="DDB_G0279315"/>
</dbReference>
<dbReference type="GeneID" id="8621986"/>
<dbReference type="KEGG" id="ddi:DDB_G0279315"/>
<dbReference type="dictyBase" id="DDB_G0279315">
    <property type="gene designation" value="gacN"/>
</dbReference>
<dbReference type="VEuPathDB" id="AmoebaDB:DDB_G0279315"/>
<dbReference type="eggNOG" id="KOG4407">
    <property type="taxonomic scope" value="Eukaryota"/>
</dbReference>
<dbReference type="HOGENOM" id="CLU_447207_0_0_1"/>
<dbReference type="InParanoid" id="Q54WY8"/>
<dbReference type="OMA" id="EYVESWK"/>
<dbReference type="PhylomeDB" id="Q54WY8"/>
<dbReference type="PRO" id="PR:Q54WY8"/>
<dbReference type="Proteomes" id="UP000002195">
    <property type="component" value="Chromosome 3"/>
</dbReference>
<dbReference type="GO" id="GO:0005737">
    <property type="term" value="C:cytoplasm"/>
    <property type="evidence" value="ECO:0007669"/>
    <property type="project" value="UniProtKB-SubCell"/>
</dbReference>
<dbReference type="GO" id="GO:0005096">
    <property type="term" value="F:GTPase activator activity"/>
    <property type="evidence" value="ECO:0007669"/>
    <property type="project" value="UniProtKB-KW"/>
</dbReference>
<dbReference type="GO" id="GO:0007165">
    <property type="term" value="P:signal transduction"/>
    <property type="evidence" value="ECO:0007669"/>
    <property type="project" value="InterPro"/>
</dbReference>
<dbReference type="CDD" id="cd00159">
    <property type="entry name" value="RhoGAP"/>
    <property type="match status" value="1"/>
</dbReference>
<dbReference type="FunFam" id="1.10.555.10:FF:000120">
    <property type="entry name" value="Rho GTPase-activating protein gacN"/>
    <property type="match status" value="1"/>
</dbReference>
<dbReference type="Gene3D" id="1.10.555.10">
    <property type="entry name" value="Rho GTPase activation protein"/>
    <property type="match status" value="1"/>
</dbReference>
<dbReference type="InterPro" id="IPR008936">
    <property type="entry name" value="Rho_GTPase_activation_prot"/>
</dbReference>
<dbReference type="InterPro" id="IPR000198">
    <property type="entry name" value="RhoGAP_dom"/>
</dbReference>
<dbReference type="PANTHER" id="PTHR45808">
    <property type="entry name" value="RHO GTPASE-ACTIVATING PROTEIN 68F"/>
    <property type="match status" value="1"/>
</dbReference>
<dbReference type="PANTHER" id="PTHR45808:SF2">
    <property type="entry name" value="RHO GTPASE-ACTIVATING PROTEIN 68F"/>
    <property type="match status" value="1"/>
</dbReference>
<dbReference type="Pfam" id="PF00620">
    <property type="entry name" value="RhoGAP"/>
    <property type="match status" value="1"/>
</dbReference>
<dbReference type="SMART" id="SM00324">
    <property type="entry name" value="RhoGAP"/>
    <property type="match status" value="1"/>
</dbReference>
<dbReference type="SUPFAM" id="SSF48350">
    <property type="entry name" value="GTPase activation domain, GAP"/>
    <property type="match status" value="1"/>
</dbReference>
<dbReference type="PROSITE" id="PS50238">
    <property type="entry name" value="RHOGAP"/>
    <property type="match status" value="1"/>
</dbReference>
<organism>
    <name type="scientific">Dictyostelium discoideum</name>
    <name type="common">Social amoeba</name>
    <dbReference type="NCBI Taxonomy" id="44689"/>
    <lineage>
        <taxon>Eukaryota</taxon>
        <taxon>Amoebozoa</taxon>
        <taxon>Evosea</taxon>
        <taxon>Eumycetozoa</taxon>
        <taxon>Dictyostelia</taxon>
        <taxon>Dictyosteliales</taxon>
        <taxon>Dictyosteliaceae</taxon>
        <taxon>Dictyostelium</taxon>
    </lineage>
</organism>
<name>GACN_DICDI</name>
<protein>
    <recommendedName>
        <fullName>Rho GTPase-activating protein gacN</fullName>
    </recommendedName>
    <alternativeName>
        <fullName>GTPase activating factor for raC protein N</fullName>
    </alternativeName>
</protein>
<keyword id="KW-0175">Coiled coil</keyword>
<keyword id="KW-0963">Cytoplasm</keyword>
<keyword id="KW-0343">GTPase activation</keyword>
<keyword id="KW-1185">Reference proteome</keyword>
<sequence>MEPKEGGSPQATTLKRNKDKTMAKTFKKILKPGEKKKKQKAIVIAAIKQLIHYLETNCIELEGICRISGNNTKVKELKKQLENGEGDSIDFSKIDSHCVSGALKAFLRDGDEPLLTFDLYKNFLASIDIKDKNSKISFIKSLLSALPKENYDLLQILLKFLNTIQLHSSINKMTSSNLAIVFSPTLLRPKEESLESMMTDSNSISEVVRVLIEEFHVLYEIKQTLLYQVSAIDLGIREDKRSTSEQLEDAKVTIEQLKKHLNEEARERSILETYCTSMEQKLQELEDINKSLTEEKDSLGELLNEFKETNKNQANDINSLKNDIKDVTEKQTKTELERDELNKVKVKLEKDIETTRIELKSTNDECQKLKVNNNKLGEDIKNQMKEFEQTRKSLLENHKLEFEKHQLEIQQFRQENEQLKKEKTDADLQLERVQAEISILLSSSNDKNSKKNSLKNQKKDLDNALKKCKDQESKINQLEKEKSKLQDELTKLQKSSSSSSSSSSSSSSSQASHKFVFGKKPSSSKITTTTTTTTSPAQQPTTPPPPLDEDDIISVKKFAFYYMNLAIKTDAMTKGLPCNINSSEILEELLSKNIKVQQWSEVISKKLKENK</sequence>
<reference key="1">
    <citation type="journal article" date="2005" name="Nature">
        <title>The genome of the social amoeba Dictyostelium discoideum.</title>
        <authorList>
            <person name="Eichinger L."/>
            <person name="Pachebat J.A."/>
            <person name="Gloeckner G."/>
            <person name="Rajandream M.A."/>
            <person name="Sucgang R."/>
            <person name="Berriman M."/>
            <person name="Song J."/>
            <person name="Olsen R."/>
            <person name="Szafranski K."/>
            <person name="Xu Q."/>
            <person name="Tunggal B."/>
            <person name="Kummerfeld S."/>
            <person name="Madera M."/>
            <person name="Konfortov B.A."/>
            <person name="Rivero F."/>
            <person name="Bankier A.T."/>
            <person name="Lehmann R."/>
            <person name="Hamlin N."/>
            <person name="Davies R."/>
            <person name="Gaudet P."/>
            <person name="Fey P."/>
            <person name="Pilcher K."/>
            <person name="Chen G."/>
            <person name="Saunders D."/>
            <person name="Sodergren E.J."/>
            <person name="Davis P."/>
            <person name="Kerhornou A."/>
            <person name="Nie X."/>
            <person name="Hall N."/>
            <person name="Anjard C."/>
            <person name="Hemphill L."/>
            <person name="Bason N."/>
            <person name="Farbrother P."/>
            <person name="Desany B."/>
            <person name="Just E."/>
            <person name="Morio T."/>
            <person name="Rost R."/>
            <person name="Churcher C.M."/>
            <person name="Cooper J."/>
            <person name="Haydock S."/>
            <person name="van Driessche N."/>
            <person name="Cronin A."/>
            <person name="Goodhead I."/>
            <person name="Muzny D.M."/>
            <person name="Mourier T."/>
            <person name="Pain A."/>
            <person name="Lu M."/>
            <person name="Harper D."/>
            <person name="Lindsay R."/>
            <person name="Hauser H."/>
            <person name="James K.D."/>
            <person name="Quiles M."/>
            <person name="Madan Babu M."/>
            <person name="Saito T."/>
            <person name="Buchrieser C."/>
            <person name="Wardroper A."/>
            <person name="Felder M."/>
            <person name="Thangavelu M."/>
            <person name="Johnson D."/>
            <person name="Knights A."/>
            <person name="Loulseged H."/>
            <person name="Mungall K.L."/>
            <person name="Oliver K."/>
            <person name="Price C."/>
            <person name="Quail M.A."/>
            <person name="Urushihara H."/>
            <person name="Hernandez J."/>
            <person name="Rabbinowitsch E."/>
            <person name="Steffen D."/>
            <person name="Sanders M."/>
            <person name="Ma J."/>
            <person name="Kohara Y."/>
            <person name="Sharp S."/>
            <person name="Simmonds M.N."/>
            <person name="Spiegler S."/>
            <person name="Tivey A."/>
            <person name="Sugano S."/>
            <person name="White B."/>
            <person name="Walker D."/>
            <person name="Woodward J.R."/>
            <person name="Winckler T."/>
            <person name="Tanaka Y."/>
            <person name="Shaulsky G."/>
            <person name="Schleicher M."/>
            <person name="Weinstock G.M."/>
            <person name="Rosenthal A."/>
            <person name="Cox E.C."/>
            <person name="Chisholm R.L."/>
            <person name="Gibbs R.A."/>
            <person name="Loomis W.F."/>
            <person name="Platzer M."/>
            <person name="Kay R.R."/>
            <person name="Williams J.G."/>
            <person name="Dear P.H."/>
            <person name="Noegel A.A."/>
            <person name="Barrell B.G."/>
            <person name="Kuspa A."/>
        </authorList>
    </citation>
    <scope>NUCLEOTIDE SEQUENCE [LARGE SCALE GENOMIC DNA]</scope>
    <source>
        <strain>AX4</strain>
    </source>
</reference>
<feature type="chain" id="PRO_0000380212" description="Rho GTPase-activating protein gacN">
    <location>
        <begin position="1"/>
        <end position="611"/>
    </location>
</feature>
<feature type="domain" description="Rho-GAP" evidence="3">
    <location>
        <begin position="24"/>
        <end position="219"/>
    </location>
</feature>
<feature type="region of interest" description="Disordered" evidence="4">
    <location>
        <begin position="476"/>
        <end position="550"/>
    </location>
</feature>
<feature type="coiled-coil region" evidence="2">
    <location>
        <begin position="236"/>
        <end position="499"/>
    </location>
</feature>
<feature type="compositionally biased region" description="Basic and acidic residues" evidence="4">
    <location>
        <begin position="476"/>
        <end position="491"/>
    </location>
</feature>
<feature type="compositionally biased region" description="Low complexity" evidence="4">
    <location>
        <begin position="495"/>
        <end position="509"/>
    </location>
</feature>
<feature type="compositionally biased region" description="Low complexity" evidence="4">
    <location>
        <begin position="527"/>
        <end position="540"/>
    </location>
</feature>
<feature type="site" description="Arginine finger; crucial for GTP hydrolysis by stabilizing the transition state" evidence="3">
    <location>
        <position position="66"/>
    </location>
</feature>
<proteinExistence type="inferred from homology"/>
<comment type="function">
    <text evidence="1">Rho GTPase-activating protein involved in the signal transduction pathway.</text>
</comment>
<comment type="subcellular location">
    <subcellularLocation>
        <location evidence="1">Cytoplasm</location>
    </subcellularLocation>
</comment>